<organism>
    <name type="scientific">Homo sapiens</name>
    <name type="common">Human</name>
    <dbReference type="NCBI Taxonomy" id="9606"/>
    <lineage>
        <taxon>Eukaryota</taxon>
        <taxon>Metazoa</taxon>
        <taxon>Chordata</taxon>
        <taxon>Craniata</taxon>
        <taxon>Vertebrata</taxon>
        <taxon>Euteleostomi</taxon>
        <taxon>Mammalia</taxon>
        <taxon>Eutheria</taxon>
        <taxon>Euarchontoglires</taxon>
        <taxon>Primates</taxon>
        <taxon>Haplorrhini</taxon>
        <taxon>Catarrhini</taxon>
        <taxon>Hominidae</taxon>
        <taxon>Homo</taxon>
    </lineage>
</organism>
<keyword id="KW-1003">Cell membrane</keyword>
<keyword id="KW-1015">Disulfide bond</keyword>
<keyword id="KW-0297">G-protein coupled receptor</keyword>
<keyword id="KW-0325">Glycoprotein</keyword>
<keyword id="KW-0472">Membrane</keyword>
<keyword id="KW-0552">Olfaction</keyword>
<keyword id="KW-0675">Receptor</keyword>
<keyword id="KW-1185">Reference proteome</keyword>
<keyword id="KW-0716">Sensory transduction</keyword>
<keyword id="KW-0807">Transducer</keyword>
<keyword id="KW-0812">Transmembrane</keyword>
<keyword id="KW-1133">Transmembrane helix</keyword>
<accession>Q8NH61</accession>
<accession>Q6IFI1</accession>
<reference key="1">
    <citation type="submission" date="2001-07" db="EMBL/GenBank/DDBJ databases">
        <title>Genome-wide discovery and analysis of human seven transmembrane helix receptor genes.</title>
        <authorList>
            <person name="Suwa M."/>
            <person name="Sato T."/>
            <person name="Okouchi I."/>
            <person name="Arita M."/>
            <person name="Futami K."/>
            <person name="Matsumoto S."/>
            <person name="Tsutsumi S."/>
            <person name="Aburatani H."/>
            <person name="Asai K."/>
            <person name="Akiyama Y."/>
        </authorList>
    </citation>
    <scope>NUCLEOTIDE SEQUENCE [GENOMIC DNA]</scope>
</reference>
<reference key="2">
    <citation type="journal article" date="2006" name="Nature">
        <title>Human chromosome 11 DNA sequence and analysis including novel gene identification.</title>
        <authorList>
            <person name="Taylor T.D."/>
            <person name="Noguchi H."/>
            <person name="Totoki Y."/>
            <person name="Toyoda A."/>
            <person name="Kuroki Y."/>
            <person name="Dewar K."/>
            <person name="Lloyd C."/>
            <person name="Itoh T."/>
            <person name="Takeda T."/>
            <person name="Kim D.-W."/>
            <person name="She X."/>
            <person name="Barlow K.F."/>
            <person name="Bloom T."/>
            <person name="Bruford E."/>
            <person name="Chang J.L."/>
            <person name="Cuomo C.A."/>
            <person name="Eichler E."/>
            <person name="FitzGerald M.G."/>
            <person name="Jaffe D.B."/>
            <person name="LaButti K."/>
            <person name="Nicol R."/>
            <person name="Park H.-S."/>
            <person name="Seaman C."/>
            <person name="Sougnez C."/>
            <person name="Yang X."/>
            <person name="Zimmer A.R."/>
            <person name="Zody M.C."/>
            <person name="Birren B.W."/>
            <person name="Nusbaum C."/>
            <person name="Fujiyama A."/>
            <person name="Hattori M."/>
            <person name="Rogers J."/>
            <person name="Lander E.S."/>
            <person name="Sakaki Y."/>
        </authorList>
    </citation>
    <scope>NUCLEOTIDE SEQUENCE [LARGE SCALE GENOMIC DNA]</scope>
</reference>
<reference key="3">
    <citation type="submission" date="2005-09" db="EMBL/GenBank/DDBJ databases">
        <authorList>
            <person name="Mural R.J."/>
            <person name="Istrail S."/>
            <person name="Sutton G.G."/>
            <person name="Florea L."/>
            <person name="Halpern A.L."/>
            <person name="Mobarry C.M."/>
            <person name="Lippert R."/>
            <person name="Walenz B."/>
            <person name="Shatkay H."/>
            <person name="Dew I."/>
            <person name="Miller J.R."/>
            <person name="Flanigan M.J."/>
            <person name="Edwards N.J."/>
            <person name="Bolanos R."/>
            <person name="Fasulo D."/>
            <person name="Halldorsson B.V."/>
            <person name="Hannenhalli S."/>
            <person name="Turner R."/>
            <person name="Yooseph S."/>
            <person name="Lu F."/>
            <person name="Nusskern D.R."/>
            <person name="Shue B.C."/>
            <person name="Zheng X.H."/>
            <person name="Zhong F."/>
            <person name="Delcher A.L."/>
            <person name="Huson D.H."/>
            <person name="Kravitz S.A."/>
            <person name="Mouchard L."/>
            <person name="Reinert K."/>
            <person name="Remington K.A."/>
            <person name="Clark A.G."/>
            <person name="Waterman M.S."/>
            <person name="Eichler E.E."/>
            <person name="Adams M.D."/>
            <person name="Hunkapiller M.W."/>
            <person name="Myers E.W."/>
            <person name="Venter J.C."/>
        </authorList>
    </citation>
    <scope>NUCLEOTIDE SEQUENCE [LARGE SCALE GENOMIC DNA]</scope>
</reference>
<reference key="4">
    <citation type="journal article" date="2004" name="Genome Res.">
        <title>The status, quality, and expansion of the NIH full-length cDNA project: the Mammalian Gene Collection (MGC).</title>
        <authorList>
            <consortium name="The MGC Project Team"/>
        </authorList>
    </citation>
    <scope>NUCLEOTIDE SEQUENCE [LARGE SCALE MRNA]</scope>
</reference>
<reference key="5">
    <citation type="journal article" date="2004" name="Proc. Natl. Acad. Sci. U.S.A.">
        <title>The human olfactory receptor gene family.</title>
        <authorList>
            <person name="Malnic B."/>
            <person name="Godfrey P.A."/>
            <person name="Buck L.B."/>
        </authorList>
    </citation>
    <scope>IDENTIFICATION</scope>
</reference>
<reference key="6">
    <citation type="journal article" date="2004" name="Proc. Natl. Acad. Sci. U.S.A.">
        <authorList>
            <person name="Malnic B."/>
            <person name="Godfrey P.A."/>
            <person name="Buck L.B."/>
        </authorList>
    </citation>
    <scope>ERRATUM OF PUBMED:14983052</scope>
</reference>
<evidence type="ECO:0000255" key="1"/>
<evidence type="ECO:0000255" key="2">
    <source>
        <dbReference type="PROSITE-ProRule" id="PRU00521"/>
    </source>
</evidence>
<evidence type="ECO:0000305" key="3"/>
<sequence length="342" mass="38518">MTETSLSSQCFPMSVLNNTIAEPLIFLLMGIPGLKATQYWISIPFCLLYVVAVSGNSMILFVVLCERSLHKPMYYFLSMLSATDLSLSLCTLSTTLGVFWFEAREINLNACIAQMFFLHGFTFMESGVLLAMAFDRFVAICYPLRYTTILTNARIAKIGMSMLIRNVAVMLPVMLFVKRLSFCSSMVLSHSYCYHVDLIQLSCTDNRINSILGLFALLSTTGFDCPCILLSYILIIRSVLSIASSEERRKAFNTCTSHISAVSIFYLPLISLSLVHRYGHSAPPFVHIIMANVFLLIPPVLNPIIYSVKIKQIQKAIIKVLIQKHSKSNHQLFLIRDKAIYE</sequence>
<comment type="function">
    <text evidence="3">Odorant receptor.</text>
</comment>
<comment type="subcellular location">
    <subcellularLocation>
        <location>Cell membrane</location>
        <topology>Multi-pass membrane protein</topology>
    </subcellularLocation>
</comment>
<comment type="similarity">
    <text evidence="2">Belongs to the G-protein coupled receptor 1 family.</text>
</comment>
<comment type="caution">
    <text evidence="3">It is uncertain whether Met-1 or Met-13 is the initiator.</text>
</comment>
<comment type="sequence caution" evidence="3">
    <conflict type="erroneous initiation">
        <sequence resource="EMBL-CDS" id="BAC05776"/>
    </conflict>
</comment>
<comment type="online information" name="Human Olfactory Receptor Data Exploratorium (HORDE)">
    <link uri="http://genome.weizmann.ac.il/horde/card/index/symbol:OR51F2"/>
</comment>
<protein>
    <recommendedName>
        <fullName>Olfactory receptor 51F2</fullName>
    </recommendedName>
    <alternativeName>
        <fullName>Olfactory receptor OR11-23</fullName>
    </alternativeName>
</protein>
<proteinExistence type="evidence at transcript level"/>
<name>O51F2_HUMAN</name>
<gene>
    <name type="primary">OR51F2</name>
</gene>
<dbReference type="EMBL" id="AB065529">
    <property type="protein sequence ID" value="BAC05776.1"/>
    <property type="status" value="ALT_INIT"/>
    <property type="molecule type" value="Genomic_DNA"/>
</dbReference>
<dbReference type="EMBL" id="AC103710">
    <property type="status" value="NOT_ANNOTATED_CDS"/>
    <property type="molecule type" value="Genomic_DNA"/>
</dbReference>
<dbReference type="EMBL" id="CH471064">
    <property type="protein sequence ID" value="EAW68826.1"/>
    <property type="molecule type" value="Genomic_DNA"/>
</dbReference>
<dbReference type="EMBL" id="BC136877">
    <property type="protein sequence ID" value="AAI36878.1"/>
    <property type="molecule type" value="mRNA"/>
</dbReference>
<dbReference type="EMBL" id="BK004281">
    <property type="protein sequence ID" value="DAA04679.1"/>
    <property type="molecule type" value="Genomic_DNA"/>
</dbReference>
<dbReference type="RefSeq" id="NP_001004753.1">
    <property type="nucleotide sequence ID" value="NM_001004753.1"/>
</dbReference>
<dbReference type="SMR" id="Q8NH61"/>
<dbReference type="BioGRID" id="125652">
    <property type="interactions" value="1"/>
</dbReference>
<dbReference type="FunCoup" id="Q8NH61">
    <property type="interactions" value="480"/>
</dbReference>
<dbReference type="IntAct" id="Q8NH61">
    <property type="interactions" value="1"/>
</dbReference>
<dbReference type="STRING" id="9606.ENSP00000493050"/>
<dbReference type="GlyCosmos" id="Q8NH61">
    <property type="glycosylation" value="1 site, No reported glycans"/>
</dbReference>
<dbReference type="GlyGen" id="Q8NH61">
    <property type="glycosylation" value="1 site"/>
</dbReference>
<dbReference type="iPTMnet" id="Q8NH61"/>
<dbReference type="PhosphoSitePlus" id="Q8NH61"/>
<dbReference type="BioMuta" id="OR51F2"/>
<dbReference type="DMDM" id="223590112"/>
<dbReference type="MassIVE" id="Q8NH61"/>
<dbReference type="PaxDb" id="9606-ENSP00000323952"/>
<dbReference type="Antibodypedia" id="57550">
    <property type="antibodies" value="48 antibodies from 15 providers"/>
</dbReference>
<dbReference type="DNASU" id="119694"/>
<dbReference type="Ensembl" id="ENST00000641672.1">
    <property type="protein sequence ID" value="ENSP00000493050.1"/>
    <property type="gene ID" value="ENSG00000176925.8"/>
</dbReference>
<dbReference type="GeneID" id="119694"/>
<dbReference type="KEGG" id="hsa:119694"/>
<dbReference type="UCSC" id="uc010qyn.2">
    <property type="organism name" value="human"/>
</dbReference>
<dbReference type="AGR" id="HGNC:15197"/>
<dbReference type="CTD" id="119694"/>
<dbReference type="GeneCards" id="OR51F2"/>
<dbReference type="HGNC" id="HGNC:15197">
    <property type="gene designation" value="OR51F2"/>
</dbReference>
<dbReference type="HPA" id="ENSG00000176925">
    <property type="expression patterns" value="Not detected"/>
</dbReference>
<dbReference type="neXtProt" id="NX_Q8NH61"/>
<dbReference type="OpenTargets" id="ENSG00000176925"/>
<dbReference type="PharmGKB" id="PA32375"/>
<dbReference type="VEuPathDB" id="HostDB:ENSG00000176925"/>
<dbReference type="eggNOG" id="ENOG502RF9W">
    <property type="taxonomic scope" value="Eukaryota"/>
</dbReference>
<dbReference type="GeneTree" id="ENSGT01130000278299"/>
<dbReference type="HOGENOM" id="CLU_012526_0_0_1"/>
<dbReference type="InParanoid" id="Q8NH61"/>
<dbReference type="OrthoDB" id="9444602at2759"/>
<dbReference type="PAN-GO" id="Q8NH61">
    <property type="GO annotations" value="2 GO annotations based on evolutionary models"/>
</dbReference>
<dbReference type="PhylomeDB" id="Q8NH61"/>
<dbReference type="TreeFam" id="TF342735"/>
<dbReference type="PathwayCommons" id="Q8NH61"/>
<dbReference type="Reactome" id="R-HSA-9752946">
    <property type="pathway name" value="Expression and translocation of olfactory receptors"/>
</dbReference>
<dbReference type="SignaLink" id="Q8NH61"/>
<dbReference type="BioGRID-ORCS" id="119694">
    <property type="hits" value="12 hits in 747 CRISPR screens"/>
</dbReference>
<dbReference type="GeneWiki" id="OR51F2"/>
<dbReference type="GenomeRNAi" id="119694"/>
<dbReference type="Pharos" id="Q8NH61">
    <property type="development level" value="Tdark"/>
</dbReference>
<dbReference type="PRO" id="PR:Q8NH61"/>
<dbReference type="Proteomes" id="UP000005640">
    <property type="component" value="Chromosome 11"/>
</dbReference>
<dbReference type="RNAct" id="Q8NH61">
    <property type="molecule type" value="protein"/>
</dbReference>
<dbReference type="Bgee" id="ENSG00000176925">
    <property type="expression patterns" value="Expressed in primordial germ cell in gonad"/>
</dbReference>
<dbReference type="ExpressionAtlas" id="Q8NH61">
    <property type="expression patterns" value="baseline and differential"/>
</dbReference>
<dbReference type="GO" id="GO:0005886">
    <property type="term" value="C:plasma membrane"/>
    <property type="evidence" value="ECO:0000318"/>
    <property type="project" value="GO_Central"/>
</dbReference>
<dbReference type="GO" id="GO:0004930">
    <property type="term" value="F:G protein-coupled receptor activity"/>
    <property type="evidence" value="ECO:0007669"/>
    <property type="project" value="UniProtKB-KW"/>
</dbReference>
<dbReference type="GO" id="GO:0004984">
    <property type="term" value="F:olfactory receptor activity"/>
    <property type="evidence" value="ECO:0000318"/>
    <property type="project" value="GO_Central"/>
</dbReference>
<dbReference type="CDD" id="cd15222">
    <property type="entry name" value="7tmA_OR51-like"/>
    <property type="match status" value="1"/>
</dbReference>
<dbReference type="FunFam" id="1.20.1070.10:FF:000002">
    <property type="entry name" value="Olfactory receptor"/>
    <property type="match status" value="1"/>
</dbReference>
<dbReference type="Gene3D" id="1.20.1070.10">
    <property type="entry name" value="Rhodopsin 7-helix transmembrane proteins"/>
    <property type="match status" value="1"/>
</dbReference>
<dbReference type="InterPro" id="IPR000276">
    <property type="entry name" value="GPCR_Rhodpsn"/>
</dbReference>
<dbReference type="InterPro" id="IPR017452">
    <property type="entry name" value="GPCR_Rhodpsn_7TM"/>
</dbReference>
<dbReference type="InterPro" id="IPR000725">
    <property type="entry name" value="Olfact_rcpt"/>
</dbReference>
<dbReference type="InterPro" id="IPR050402">
    <property type="entry name" value="OR51/52/56-like"/>
</dbReference>
<dbReference type="PANTHER" id="PTHR26450:SF87">
    <property type="entry name" value="OLFACTORY RECEPTOR 51F2"/>
    <property type="match status" value="1"/>
</dbReference>
<dbReference type="PANTHER" id="PTHR26450">
    <property type="entry name" value="OLFACTORY RECEPTOR 56B1-RELATED"/>
    <property type="match status" value="1"/>
</dbReference>
<dbReference type="Pfam" id="PF13853">
    <property type="entry name" value="7tm_4"/>
    <property type="match status" value="1"/>
</dbReference>
<dbReference type="PRINTS" id="PR00237">
    <property type="entry name" value="GPCRRHODOPSN"/>
</dbReference>
<dbReference type="PRINTS" id="PR00245">
    <property type="entry name" value="OLFACTORYR"/>
</dbReference>
<dbReference type="SUPFAM" id="SSF81321">
    <property type="entry name" value="Family A G protein-coupled receptor-like"/>
    <property type="match status" value="1"/>
</dbReference>
<dbReference type="PROSITE" id="PS00237">
    <property type="entry name" value="G_PROTEIN_RECEP_F1_1"/>
    <property type="match status" value="1"/>
</dbReference>
<dbReference type="PROSITE" id="PS50262">
    <property type="entry name" value="G_PROTEIN_RECEP_F1_2"/>
    <property type="match status" value="1"/>
</dbReference>
<feature type="chain" id="PRO_0000150753" description="Olfactory receptor 51F2">
    <location>
        <begin position="1"/>
        <end position="342"/>
    </location>
</feature>
<feature type="topological domain" description="Extracellular" evidence="1">
    <location>
        <begin position="1"/>
        <end position="39"/>
    </location>
</feature>
<feature type="transmembrane region" description="Helical; Name=1" evidence="1">
    <location>
        <begin position="40"/>
        <end position="60"/>
    </location>
</feature>
<feature type="topological domain" description="Cytoplasmic" evidence="1">
    <location>
        <begin position="61"/>
        <end position="68"/>
    </location>
</feature>
<feature type="transmembrane region" description="Helical; Name=2" evidence="1">
    <location>
        <begin position="69"/>
        <end position="89"/>
    </location>
</feature>
<feature type="topological domain" description="Extracellular" evidence="1">
    <location>
        <begin position="90"/>
        <end position="113"/>
    </location>
</feature>
<feature type="transmembrane region" description="Helical; Name=3" evidence="1">
    <location>
        <begin position="114"/>
        <end position="134"/>
    </location>
</feature>
<feature type="topological domain" description="Cytoplasmic" evidence="1">
    <location>
        <begin position="135"/>
        <end position="153"/>
    </location>
</feature>
<feature type="transmembrane region" description="Helical; Name=4" evidence="1">
    <location>
        <begin position="154"/>
        <end position="174"/>
    </location>
</feature>
<feature type="topological domain" description="Extracellular" evidence="1">
    <location>
        <begin position="175"/>
        <end position="210"/>
    </location>
</feature>
<feature type="transmembrane region" description="Helical; Name=5" evidence="1">
    <location>
        <begin position="211"/>
        <end position="231"/>
    </location>
</feature>
<feature type="topological domain" description="Cytoplasmic" evidence="1">
    <location>
        <begin position="232"/>
        <end position="251"/>
    </location>
</feature>
<feature type="transmembrane region" description="Helical; Name=6" evidence="1">
    <location>
        <begin position="252"/>
        <end position="272"/>
    </location>
</feature>
<feature type="topological domain" description="Extracellular" evidence="1">
    <location>
        <begin position="273"/>
        <end position="287"/>
    </location>
</feature>
<feature type="transmembrane region" description="Helical; Name=7" evidence="1">
    <location>
        <begin position="288"/>
        <end position="308"/>
    </location>
</feature>
<feature type="topological domain" description="Cytoplasmic" evidence="1">
    <location>
        <begin position="309"/>
        <end position="342"/>
    </location>
</feature>
<feature type="glycosylation site" description="N-linked (GlcNAc...) asparagine" evidence="1">
    <location>
        <position position="17"/>
    </location>
</feature>
<feature type="disulfide bond" evidence="2">
    <location>
        <begin position="111"/>
        <end position="203"/>
    </location>
</feature>